<reference key="1">
    <citation type="submission" date="2001-07" db="EMBL/GenBank/DDBJ databases">
        <title>Genome-wide discovery and analysis of human seven transmembrane helix receptor genes.</title>
        <authorList>
            <person name="Suwa M."/>
            <person name="Sato T."/>
            <person name="Okouchi I."/>
            <person name="Arita M."/>
            <person name="Futami K."/>
            <person name="Matsumoto S."/>
            <person name="Tsutsumi S."/>
            <person name="Aburatani H."/>
            <person name="Asai K."/>
            <person name="Akiyama Y."/>
        </authorList>
    </citation>
    <scope>NUCLEOTIDE SEQUENCE [GENOMIC DNA]</scope>
</reference>
<reference key="2">
    <citation type="journal article" date="2006" name="Nature">
        <title>The finished DNA sequence of human chromosome 12.</title>
        <authorList>
            <person name="Scherer S.E."/>
            <person name="Muzny D.M."/>
            <person name="Buhay C.J."/>
            <person name="Chen R."/>
            <person name="Cree A."/>
            <person name="Ding Y."/>
            <person name="Dugan-Rocha S."/>
            <person name="Gill R."/>
            <person name="Gunaratne P."/>
            <person name="Harris R.A."/>
            <person name="Hawes A.C."/>
            <person name="Hernandez J."/>
            <person name="Hodgson A.V."/>
            <person name="Hume J."/>
            <person name="Jackson A."/>
            <person name="Khan Z.M."/>
            <person name="Kovar-Smith C."/>
            <person name="Lewis L.R."/>
            <person name="Lozado R.J."/>
            <person name="Metzker M.L."/>
            <person name="Milosavljevic A."/>
            <person name="Miner G.R."/>
            <person name="Montgomery K.T."/>
            <person name="Morgan M.B."/>
            <person name="Nazareth L.V."/>
            <person name="Scott G."/>
            <person name="Sodergren E."/>
            <person name="Song X.-Z."/>
            <person name="Steffen D."/>
            <person name="Lovering R.C."/>
            <person name="Wheeler D.A."/>
            <person name="Worley K.C."/>
            <person name="Yuan Y."/>
            <person name="Zhang Z."/>
            <person name="Adams C.Q."/>
            <person name="Ansari-Lari M.A."/>
            <person name="Ayele M."/>
            <person name="Brown M.J."/>
            <person name="Chen G."/>
            <person name="Chen Z."/>
            <person name="Clerc-Blankenburg K.P."/>
            <person name="Davis C."/>
            <person name="Delgado O."/>
            <person name="Dinh H.H."/>
            <person name="Draper H."/>
            <person name="Gonzalez-Garay M.L."/>
            <person name="Havlak P."/>
            <person name="Jackson L.R."/>
            <person name="Jacob L.S."/>
            <person name="Kelly S.H."/>
            <person name="Li L."/>
            <person name="Li Z."/>
            <person name="Liu J."/>
            <person name="Liu W."/>
            <person name="Lu J."/>
            <person name="Maheshwari M."/>
            <person name="Nguyen B.-V."/>
            <person name="Okwuonu G.O."/>
            <person name="Pasternak S."/>
            <person name="Perez L.M."/>
            <person name="Plopper F.J.H."/>
            <person name="Santibanez J."/>
            <person name="Shen H."/>
            <person name="Tabor P.E."/>
            <person name="Verduzco D."/>
            <person name="Waldron L."/>
            <person name="Wang Q."/>
            <person name="Williams G.A."/>
            <person name="Zhang J."/>
            <person name="Zhou J."/>
            <person name="Allen C.C."/>
            <person name="Amin A.G."/>
            <person name="Anyalebechi V."/>
            <person name="Bailey M."/>
            <person name="Barbaria J.A."/>
            <person name="Bimage K.E."/>
            <person name="Bryant N.P."/>
            <person name="Burch P.E."/>
            <person name="Burkett C.E."/>
            <person name="Burrell K.L."/>
            <person name="Calderon E."/>
            <person name="Cardenas V."/>
            <person name="Carter K."/>
            <person name="Casias K."/>
            <person name="Cavazos I."/>
            <person name="Cavazos S.R."/>
            <person name="Ceasar H."/>
            <person name="Chacko J."/>
            <person name="Chan S.N."/>
            <person name="Chavez D."/>
            <person name="Christopoulos C."/>
            <person name="Chu J."/>
            <person name="Cockrell R."/>
            <person name="Cox C.D."/>
            <person name="Dang M."/>
            <person name="Dathorne S.R."/>
            <person name="David R."/>
            <person name="Davis C.M."/>
            <person name="Davy-Carroll L."/>
            <person name="Deshazo D.R."/>
            <person name="Donlin J.E."/>
            <person name="D'Souza L."/>
            <person name="Eaves K.A."/>
            <person name="Egan A."/>
            <person name="Emery-Cohen A.J."/>
            <person name="Escotto M."/>
            <person name="Flagg N."/>
            <person name="Forbes L.D."/>
            <person name="Gabisi A.M."/>
            <person name="Garza M."/>
            <person name="Hamilton C."/>
            <person name="Henderson N."/>
            <person name="Hernandez O."/>
            <person name="Hines S."/>
            <person name="Hogues M.E."/>
            <person name="Huang M."/>
            <person name="Idlebird D.G."/>
            <person name="Johnson R."/>
            <person name="Jolivet A."/>
            <person name="Jones S."/>
            <person name="Kagan R."/>
            <person name="King L.M."/>
            <person name="Leal B."/>
            <person name="Lebow H."/>
            <person name="Lee S."/>
            <person name="LeVan J.M."/>
            <person name="Lewis L.C."/>
            <person name="London P."/>
            <person name="Lorensuhewa L.M."/>
            <person name="Loulseged H."/>
            <person name="Lovett D.A."/>
            <person name="Lucier A."/>
            <person name="Lucier R.L."/>
            <person name="Ma J."/>
            <person name="Madu R.C."/>
            <person name="Mapua P."/>
            <person name="Martindale A.D."/>
            <person name="Martinez E."/>
            <person name="Massey E."/>
            <person name="Mawhiney S."/>
            <person name="Meador M.G."/>
            <person name="Mendez S."/>
            <person name="Mercado C."/>
            <person name="Mercado I.C."/>
            <person name="Merritt C.E."/>
            <person name="Miner Z.L."/>
            <person name="Minja E."/>
            <person name="Mitchell T."/>
            <person name="Mohabbat F."/>
            <person name="Mohabbat K."/>
            <person name="Montgomery B."/>
            <person name="Moore N."/>
            <person name="Morris S."/>
            <person name="Munidasa M."/>
            <person name="Ngo R.N."/>
            <person name="Nguyen N.B."/>
            <person name="Nickerson E."/>
            <person name="Nwaokelemeh O.O."/>
            <person name="Nwokenkwo S."/>
            <person name="Obregon M."/>
            <person name="Oguh M."/>
            <person name="Oragunye N."/>
            <person name="Oviedo R.J."/>
            <person name="Parish B.J."/>
            <person name="Parker D.N."/>
            <person name="Parrish J."/>
            <person name="Parks K.L."/>
            <person name="Paul H.A."/>
            <person name="Payton B.A."/>
            <person name="Perez A."/>
            <person name="Perrin W."/>
            <person name="Pickens A."/>
            <person name="Primus E.L."/>
            <person name="Pu L.-L."/>
            <person name="Puazo M."/>
            <person name="Quiles M.M."/>
            <person name="Quiroz J.B."/>
            <person name="Rabata D."/>
            <person name="Reeves K."/>
            <person name="Ruiz S.J."/>
            <person name="Shao H."/>
            <person name="Sisson I."/>
            <person name="Sonaike T."/>
            <person name="Sorelle R.P."/>
            <person name="Sutton A.E."/>
            <person name="Svatek A.F."/>
            <person name="Svetz L.A."/>
            <person name="Tamerisa K.S."/>
            <person name="Taylor T.R."/>
            <person name="Teague B."/>
            <person name="Thomas N."/>
            <person name="Thorn R.D."/>
            <person name="Trejos Z.Y."/>
            <person name="Trevino B.K."/>
            <person name="Ukegbu O.N."/>
            <person name="Urban J.B."/>
            <person name="Vasquez L.I."/>
            <person name="Vera V.A."/>
            <person name="Villasana D.M."/>
            <person name="Wang L."/>
            <person name="Ward-Moore S."/>
            <person name="Warren J.T."/>
            <person name="Wei X."/>
            <person name="White F."/>
            <person name="Williamson A.L."/>
            <person name="Wleczyk R."/>
            <person name="Wooden H.S."/>
            <person name="Wooden S.H."/>
            <person name="Yen J."/>
            <person name="Yoon L."/>
            <person name="Yoon V."/>
            <person name="Zorrilla S.E."/>
            <person name="Nelson D."/>
            <person name="Kucherlapati R."/>
            <person name="Weinstock G."/>
            <person name="Gibbs R.A."/>
        </authorList>
    </citation>
    <scope>NUCLEOTIDE SEQUENCE [LARGE SCALE GENOMIC DNA]</scope>
</reference>
<reference key="3">
    <citation type="journal article" date="2004" name="Genome Res.">
        <title>The status, quality, and expansion of the NIH full-length cDNA project: the Mammalian Gene Collection (MGC).</title>
        <authorList>
            <consortium name="The MGC Project Team"/>
        </authorList>
    </citation>
    <scope>NUCLEOTIDE SEQUENCE [LARGE SCALE MRNA]</scope>
    <scope>VARIANT MET-200</scope>
</reference>
<reference key="4">
    <citation type="journal article" date="2004" name="Proc. Natl. Acad. Sci. U.S.A.">
        <title>The human olfactory receptor gene family.</title>
        <authorList>
            <person name="Malnic B."/>
            <person name="Godfrey P.A."/>
            <person name="Buck L.B."/>
        </authorList>
    </citation>
    <scope>IDENTIFICATION</scope>
</reference>
<reference key="5">
    <citation type="journal article" date="2004" name="Proc. Natl. Acad. Sci. U.S.A.">
        <authorList>
            <person name="Malnic B."/>
            <person name="Godfrey P.A."/>
            <person name="Buck L.B."/>
        </authorList>
    </citation>
    <scope>ERRATUM OF PUBMED:14983052</scope>
</reference>
<name>O10P1_HUMAN</name>
<protein>
    <recommendedName>
        <fullName>Olfactory receptor 10P1</fullName>
    </recommendedName>
    <alternativeName>
        <fullName>Olfactory receptor 10P2</fullName>
    </alternativeName>
    <alternativeName>
        <fullName>Olfactory receptor 10P3</fullName>
    </alternativeName>
    <alternativeName>
        <fullName>Olfactory receptor OR12-7</fullName>
    </alternativeName>
</protein>
<proteinExistence type="evidence at transcript level"/>
<keyword id="KW-1003">Cell membrane</keyword>
<keyword id="KW-0297">G-protein coupled receptor</keyword>
<keyword id="KW-0325">Glycoprotein</keyword>
<keyword id="KW-0472">Membrane</keyword>
<keyword id="KW-0552">Olfaction</keyword>
<keyword id="KW-0675">Receptor</keyword>
<keyword id="KW-1185">Reference proteome</keyword>
<keyword id="KW-0716">Sensory transduction</keyword>
<keyword id="KW-0807">Transducer</keyword>
<keyword id="KW-0812">Transmembrane</keyword>
<keyword id="KW-1133">Transmembrane helix</keyword>
<evidence type="ECO:0000255" key="1"/>
<evidence type="ECO:0000255" key="2">
    <source>
        <dbReference type="PROSITE-ProRule" id="PRU00521"/>
    </source>
</evidence>
<evidence type="ECO:0000269" key="3">
    <source>
    </source>
</evidence>
<evidence type="ECO:0000305" key="4"/>
<organism>
    <name type="scientific">Homo sapiens</name>
    <name type="common">Human</name>
    <dbReference type="NCBI Taxonomy" id="9606"/>
    <lineage>
        <taxon>Eukaryota</taxon>
        <taxon>Metazoa</taxon>
        <taxon>Chordata</taxon>
        <taxon>Craniata</taxon>
        <taxon>Vertebrata</taxon>
        <taxon>Euteleostomi</taxon>
        <taxon>Mammalia</taxon>
        <taxon>Eutheria</taxon>
        <taxon>Euarchontoglires</taxon>
        <taxon>Primates</taxon>
        <taxon>Haplorrhini</taxon>
        <taxon>Catarrhini</taxon>
        <taxon>Hominidae</taxon>
        <taxon>Homo</taxon>
    </lineage>
</organism>
<dbReference type="EMBL" id="AB065867">
    <property type="protein sequence ID" value="BAC06085.1"/>
    <property type="molecule type" value="Genomic_DNA"/>
</dbReference>
<dbReference type="EMBL" id="AC009779">
    <property type="status" value="NOT_ANNOTATED_CDS"/>
    <property type="molecule type" value="Genomic_DNA"/>
</dbReference>
<dbReference type="EMBL" id="BC136914">
    <property type="protein sequence ID" value="AAI36915.1"/>
    <property type="molecule type" value="mRNA"/>
</dbReference>
<dbReference type="EMBL" id="BK004259">
    <property type="protein sequence ID" value="DAA04657.1"/>
    <property type="molecule type" value="Genomic_DNA"/>
</dbReference>
<dbReference type="CCDS" id="CCDS31828.1"/>
<dbReference type="RefSeq" id="NP_996782.1">
    <property type="nucleotide sequence ID" value="NM_206899.1"/>
</dbReference>
<dbReference type="SMR" id="Q8NGE3"/>
<dbReference type="FunCoup" id="Q8NGE3">
    <property type="interactions" value="462"/>
</dbReference>
<dbReference type="STRING" id="9606.ENSP00000308082"/>
<dbReference type="GlyCosmos" id="Q8NGE3">
    <property type="glycosylation" value="1 site, No reported glycans"/>
</dbReference>
<dbReference type="GlyGen" id="Q8NGE3">
    <property type="glycosylation" value="1 site"/>
</dbReference>
<dbReference type="iPTMnet" id="Q8NGE3"/>
<dbReference type="PhosphoSitePlus" id="Q8NGE3"/>
<dbReference type="BioMuta" id="OR10P1"/>
<dbReference type="DMDM" id="51316486"/>
<dbReference type="MassIVE" id="Q8NGE3"/>
<dbReference type="PaxDb" id="9606-ENSP00000308082"/>
<dbReference type="Antibodypedia" id="70984">
    <property type="antibodies" value="39 antibodies from 17 providers"/>
</dbReference>
<dbReference type="DNASU" id="121130"/>
<dbReference type="Ensembl" id="ENST00000309675.3">
    <property type="protein sequence ID" value="ENSP00000308082.2"/>
    <property type="gene ID" value="ENSG00000175398.3"/>
</dbReference>
<dbReference type="GeneID" id="121130"/>
<dbReference type="KEGG" id="hsa:121130"/>
<dbReference type="MANE-Select" id="ENST00000309675.3">
    <property type="protein sequence ID" value="ENSP00000308082.2"/>
    <property type="RefSeq nucleotide sequence ID" value="NM_206899.1"/>
    <property type="RefSeq protein sequence ID" value="NP_996782.1"/>
</dbReference>
<dbReference type="UCSC" id="uc010spq.3">
    <property type="organism name" value="human"/>
</dbReference>
<dbReference type="AGR" id="HGNC:15378"/>
<dbReference type="CTD" id="121130"/>
<dbReference type="GeneCards" id="OR10P1"/>
<dbReference type="HGNC" id="HGNC:15378">
    <property type="gene designation" value="OR10P1"/>
</dbReference>
<dbReference type="HPA" id="ENSG00000175398">
    <property type="expression patterns" value="Not detected"/>
</dbReference>
<dbReference type="neXtProt" id="NX_Q8NGE3"/>
<dbReference type="OpenTargets" id="ENSG00000175398"/>
<dbReference type="PharmGKB" id="PA31991"/>
<dbReference type="VEuPathDB" id="HostDB:ENSG00000175398"/>
<dbReference type="eggNOG" id="ENOG502SIWR">
    <property type="taxonomic scope" value="Eukaryota"/>
</dbReference>
<dbReference type="GeneTree" id="ENSGT01120000271813"/>
<dbReference type="HOGENOM" id="CLU_012526_1_0_1"/>
<dbReference type="InParanoid" id="Q8NGE3"/>
<dbReference type="OMA" id="HMVKRQV"/>
<dbReference type="OrthoDB" id="9975554at2759"/>
<dbReference type="PAN-GO" id="Q8NGE3">
    <property type="GO annotations" value="1 GO annotation based on evolutionary models"/>
</dbReference>
<dbReference type="PhylomeDB" id="Q8NGE3"/>
<dbReference type="TreeFam" id="TF337350"/>
<dbReference type="PathwayCommons" id="Q8NGE3"/>
<dbReference type="Reactome" id="R-HSA-9752946">
    <property type="pathway name" value="Expression and translocation of olfactory receptors"/>
</dbReference>
<dbReference type="BioGRID-ORCS" id="121130">
    <property type="hits" value="12 hits in 749 CRISPR screens"/>
</dbReference>
<dbReference type="GeneWiki" id="OR10P1"/>
<dbReference type="GenomeRNAi" id="121130"/>
<dbReference type="Pharos" id="Q8NGE3">
    <property type="development level" value="Tdark"/>
</dbReference>
<dbReference type="PRO" id="PR:Q8NGE3"/>
<dbReference type="Proteomes" id="UP000005640">
    <property type="component" value="Chromosome 12"/>
</dbReference>
<dbReference type="RNAct" id="Q8NGE3">
    <property type="molecule type" value="protein"/>
</dbReference>
<dbReference type="Bgee" id="ENSG00000175398">
    <property type="expression patterns" value="Expressed in right atrium auricular region and 3 other cell types or tissues"/>
</dbReference>
<dbReference type="GO" id="GO:0005886">
    <property type="term" value="C:plasma membrane"/>
    <property type="evidence" value="ECO:0000314"/>
    <property type="project" value="HPA"/>
</dbReference>
<dbReference type="GO" id="GO:0004930">
    <property type="term" value="F:G protein-coupled receptor activity"/>
    <property type="evidence" value="ECO:0007669"/>
    <property type="project" value="UniProtKB-KW"/>
</dbReference>
<dbReference type="GO" id="GO:0004984">
    <property type="term" value="F:olfactory receptor activity"/>
    <property type="evidence" value="ECO:0000318"/>
    <property type="project" value="GO_Central"/>
</dbReference>
<dbReference type="GO" id="GO:0050911">
    <property type="term" value="P:detection of chemical stimulus involved in sensory perception of smell"/>
    <property type="evidence" value="ECO:0000318"/>
    <property type="project" value="GO_Central"/>
</dbReference>
<dbReference type="CDD" id="cd15225">
    <property type="entry name" value="7tmA_OR10A-like"/>
    <property type="match status" value="1"/>
</dbReference>
<dbReference type="FunFam" id="1.10.1220.70:FF:000001">
    <property type="entry name" value="Olfactory receptor"/>
    <property type="match status" value="1"/>
</dbReference>
<dbReference type="FunFam" id="1.20.1070.10:FF:000001">
    <property type="entry name" value="Olfactory receptor"/>
    <property type="match status" value="1"/>
</dbReference>
<dbReference type="Gene3D" id="1.20.1070.10">
    <property type="entry name" value="Rhodopsin 7-helix transmembrane proteins"/>
    <property type="match status" value="1"/>
</dbReference>
<dbReference type="InterPro" id="IPR000276">
    <property type="entry name" value="GPCR_Rhodpsn"/>
</dbReference>
<dbReference type="InterPro" id="IPR017452">
    <property type="entry name" value="GPCR_Rhodpsn_7TM"/>
</dbReference>
<dbReference type="InterPro" id="IPR000725">
    <property type="entry name" value="Olfact_rcpt"/>
</dbReference>
<dbReference type="PANTHER" id="PTHR26453">
    <property type="entry name" value="OLFACTORY RECEPTOR"/>
    <property type="match status" value="1"/>
</dbReference>
<dbReference type="Pfam" id="PF13853">
    <property type="entry name" value="7tm_4"/>
    <property type="match status" value="1"/>
</dbReference>
<dbReference type="PRINTS" id="PR00237">
    <property type="entry name" value="GPCRRHODOPSN"/>
</dbReference>
<dbReference type="PRINTS" id="PR00245">
    <property type="entry name" value="OLFACTORYR"/>
</dbReference>
<dbReference type="SUPFAM" id="SSF81321">
    <property type="entry name" value="Family A G protein-coupled receptor-like"/>
    <property type="match status" value="1"/>
</dbReference>
<dbReference type="PROSITE" id="PS00237">
    <property type="entry name" value="G_PROTEIN_RECEP_F1_1"/>
    <property type="match status" value="1"/>
</dbReference>
<dbReference type="PROSITE" id="PS50262">
    <property type="entry name" value="G_PROTEIN_RECEP_F1_2"/>
    <property type="match status" value="1"/>
</dbReference>
<sequence length="313" mass="34741">MAGENHTTLPEFLLLGFSDLKALQGPLFWVVLLVYLVTLLGNSLIILLTQVSPALHSPMYFFLRQLSVVELFYTTDIVPRTLANLGSPHPQAISFQGCAAQMYVFIVLGISECCLLTAMAYDRYVAICQPLRYSTLLSPRACMAMVGTSWLTGIITATTHASLIFSLPFRSHPIIPHFLCDILPVLRLASAGKHRSEISVMTATIVFIMIPFSLIVTSYIRILGAILAMASTQSRRKVFSTCSSHLLVVSLFFGTASITYIRPQAGSSVTTDRVLSLFYTVITPMLNPIIYTLRNKDVRRALRHLVKRQRPSP</sequence>
<feature type="chain" id="PRO_0000150713" description="Olfactory receptor 10P1">
    <location>
        <begin position="1"/>
        <end position="313"/>
    </location>
</feature>
<feature type="topological domain" description="Extracellular" evidence="1">
    <location>
        <begin position="1"/>
        <end position="25"/>
    </location>
</feature>
<feature type="transmembrane region" description="Helical; Name=1" evidence="1">
    <location>
        <begin position="26"/>
        <end position="46"/>
    </location>
</feature>
<feature type="topological domain" description="Cytoplasmic" evidence="1">
    <location>
        <begin position="47"/>
        <end position="54"/>
    </location>
</feature>
<feature type="transmembrane region" description="Helical; Name=2" evidence="1">
    <location>
        <begin position="55"/>
        <end position="75"/>
    </location>
</feature>
<feature type="topological domain" description="Extracellular" evidence="1">
    <location>
        <begin position="76"/>
        <end position="100"/>
    </location>
</feature>
<feature type="transmembrane region" description="Helical; Name=3" evidence="1">
    <location>
        <begin position="101"/>
        <end position="121"/>
    </location>
</feature>
<feature type="topological domain" description="Cytoplasmic" evidence="1">
    <location>
        <begin position="122"/>
        <end position="140"/>
    </location>
</feature>
<feature type="transmembrane region" description="Helical; Name=4" evidence="1">
    <location>
        <begin position="141"/>
        <end position="161"/>
    </location>
</feature>
<feature type="topological domain" description="Extracellular" evidence="1">
    <location>
        <begin position="162"/>
        <end position="198"/>
    </location>
</feature>
<feature type="transmembrane region" description="Helical; Name=5" evidence="1">
    <location>
        <begin position="199"/>
        <end position="218"/>
    </location>
</feature>
<feature type="topological domain" description="Cytoplasmic" evidence="1">
    <location>
        <begin position="219"/>
        <end position="238"/>
    </location>
</feature>
<feature type="transmembrane region" description="Helical; Name=6" evidence="1">
    <location>
        <begin position="239"/>
        <end position="259"/>
    </location>
</feature>
<feature type="topological domain" description="Extracellular" evidence="1">
    <location>
        <begin position="260"/>
        <end position="272"/>
    </location>
</feature>
<feature type="transmembrane region" description="Helical; Name=7" evidence="1">
    <location>
        <begin position="273"/>
        <end position="293"/>
    </location>
</feature>
<feature type="topological domain" description="Cytoplasmic" evidence="1">
    <location>
        <begin position="294"/>
        <end position="313"/>
    </location>
</feature>
<feature type="glycosylation site" description="N-linked (GlcNAc...) asparagine" evidence="1">
    <location>
        <position position="5"/>
    </location>
</feature>
<feature type="sequence variant" id="VAR_034294" description="In dbSNP:rs10876838.">
    <original>P</original>
    <variation>L</variation>
    <location>
        <position position="88"/>
    </location>
</feature>
<feature type="sequence variant" id="VAR_034295" description="In dbSNP:rs7970885." evidence="3">
    <original>V</original>
    <variation>M</variation>
    <location>
        <position position="200"/>
    </location>
</feature>
<comment type="function">
    <text evidence="4">Odorant receptor.</text>
</comment>
<comment type="subcellular location">
    <subcellularLocation>
        <location>Cell membrane</location>
        <topology>Multi-pass membrane protein</topology>
    </subcellularLocation>
</comment>
<comment type="similarity">
    <text evidence="2">Belongs to the G-protein coupled receptor 1 family.</text>
</comment>
<comment type="online information" name="Human Olfactory Receptor Data Exploratorium (HORDE)">
    <link uri="http://genome.weizmann.ac.il/horde/card/index/symbol:OR10P1"/>
</comment>
<accession>Q8NGE3</accession>
<accession>B9EGY4</accession>
<gene>
    <name type="primary">OR10P1</name>
    <name type="synonym">OR10P1P</name>
    <name type="synonym">OR10P2P</name>
    <name type="synonym">OR10P3P</name>
</gene>